<feature type="chain" id="PRO_1000052632" description="Large ribosomal subunit protein uL22">
    <location>
        <begin position="1"/>
        <end position="110"/>
    </location>
</feature>
<keyword id="KW-1185">Reference proteome</keyword>
<keyword id="KW-0687">Ribonucleoprotein</keyword>
<keyword id="KW-0689">Ribosomal protein</keyword>
<keyword id="KW-0694">RNA-binding</keyword>
<keyword id="KW-0699">rRNA-binding</keyword>
<name>RL22_STUS1</name>
<gene>
    <name evidence="1" type="primary">rplV</name>
    <name type="ordered locus">PST_0789</name>
</gene>
<protein>
    <recommendedName>
        <fullName evidence="1">Large ribosomal subunit protein uL22</fullName>
    </recommendedName>
    <alternativeName>
        <fullName evidence="2">50S ribosomal protein L22</fullName>
    </alternativeName>
</protein>
<reference key="1">
    <citation type="journal article" date="2008" name="Proc. Natl. Acad. Sci. U.S.A.">
        <title>Nitrogen fixation island and rhizosphere competence traits in the genome of root-associated Pseudomonas stutzeri A1501.</title>
        <authorList>
            <person name="Yan Y."/>
            <person name="Yang J."/>
            <person name="Dou Y."/>
            <person name="Chen M."/>
            <person name="Ping S."/>
            <person name="Peng J."/>
            <person name="Lu W."/>
            <person name="Zhang W."/>
            <person name="Yao Z."/>
            <person name="Li H."/>
            <person name="Liu W."/>
            <person name="He S."/>
            <person name="Geng L."/>
            <person name="Zhang X."/>
            <person name="Yang F."/>
            <person name="Yu H."/>
            <person name="Zhan Y."/>
            <person name="Li D."/>
            <person name="Lin Z."/>
            <person name="Wang Y."/>
            <person name="Elmerich C."/>
            <person name="Lin M."/>
            <person name="Jin Q."/>
        </authorList>
    </citation>
    <scope>NUCLEOTIDE SEQUENCE [LARGE SCALE GENOMIC DNA]</scope>
    <source>
        <strain>A1501</strain>
    </source>
</reference>
<proteinExistence type="inferred from homology"/>
<comment type="function">
    <text evidence="1">This protein binds specifically to 23S rRNA; its binding is stimulated by other ribosomal proteins, e.g. L4, L17, and L20. It is important during the early stages of 50S assembly. It makes multiple contacts with different domains of the 23S rRNA in the assembled 50S subunit and ribosome (By similarity).</text>
</comment>
<comment type="function">
    <text evidence="1">The globular domain of the protein is located near the polypeptide exit tunnel on the outside of the subunit, while an extended beta-hairpin is found that lines the wall of the exit tunnel in the center of the 70S ribosome.</text>
</comment>
<comment type="subunit">
    <text evidence="1">Part of the 50S ribosomal subunit.</text>
</comment>
<comment type="similarity">
    <text evidence="1">Belongs to the universal ribosomal protein uL22 family.</text>
</comment>
<sequence>MEVAAKLSGARISAQKARLVADQIRGKKVGDALNLLAFSSKKAAEIMKKVLESAVANAEHNEGADVDDLKVSTVFVNEGRSLKRIMPRAKGRADRIVKRSCHITVKVADK</sequence>
<dbReference type="EMBL" id="CP000304">
    <property type="protein sequence ID" value="ABP78486.1"/>
    <property type="molecule type" value="Genomic_DNA"/>
</dbReference>
<dbReference type="RefSeq" id="WP_003304070.1">
    <property type="nucleotide sequence ID" value="NC_009434.1"/>
</dbReference>
<dbReference type="SMR" id="A4VHN5"/>
<dbReference type="GeneID" id="88184041"/>
<dbReference type="KEGG" id="psa:PST_0789"/>
<dbReference type="eggNOG" id="COG0091">
    <property type="taxonomic scope" value="Bacteria"/>
</dbReference>
<dbReference type="HOGENOM" id="CLU_083987_3_3_6"/>
<dbReference type="Proteomes" id="UP000000233">
    <property type="component" value="Chromosome"/>
</dbReference>
<dbReference type="GO" id="GO:0022625">
    <property type="term" value="C:cytosolic large ribosomal subunit"/>
    <property type="evidence" value="ECO:0007669"/>
    <property type="project" value="TreeGrafter"/>
</dbReference>
<dbReference type="GO" id="GO:0019843">
    <property type="term" value="F:rRNA binding"/>
    <property type="evidence" value="ECO:0007669"/>
    <property type="project" value="UniProtKB-UniRule"/>
</dbReference>
<dbReference type="GO" id="GO:0003735">
    <property type="term" value="F:structural constituent of ribosome"/>
    <property type="evidence" value="ECO:0007669"/>
    <property type="project" value="InterPro"/>
</dbReference>
<dbReference type="GO" id="GO:0006412">
    <property type="term" value="P:translation"/>
    <property type="evidence" value="ECO:0007669"/>
    <property type="project" value="UniProtKB-UniRule"/>
</dbReference>
<dbReference type="CDD" id="cd00336">
    <property type="entry name" value="Ribosomal_L22"/>
    <property type="match status" value="1"/>
</dbReference>
<dbReference type="FunFam" id="3.90.470.10:FF:000001">
    <property type="entry name" value="50S ribosomal protein L22"/>
    <property type="match status" value="1"/>
</dbReference>
<dbReference type="Gene3D" id="3.90.470.10">
    <property type="entry name" value="Ribosomal protein L22/L17"/>
    <property type="match status" value="1"/>
</dbReference>
<dbReference type="HAMAP" id="MF_01331_B">
    <property type="entry name" value="Ribosomal_uL22_B"/>
    <property type="match status" value="1"/>
</dbReference>
<dbReference type="InterPro" id="IPR001063">
    <property type="entry name" value="Ribosomal_uL22"/>
</dbReference>
<dbReference type="InterPro" id="IPR005727">
    <property type="entry name" value="Ribosomal_uL22_bac/chlpt-type"/>
</dbReference>
<dbReference type="InterPro" id="IPR047867">
    <property type="entry name" value="Ribosomal_uL22_bac/org-type"/>
</dbReference>
<dbReference type="InterPro" id="IPR018260">
    <property type="entry name" value="Ribosomal_uL22_CS"/>
</dbReference>
<dbReference type="InterPro" id="IPR036394">
    <property type="entry name" value="Ribosomal_uL22_sf"/>
</dbReference>
<dbReference type="NCBIfam" id="TIGR01044">
    <property type="entry name" value="rplV_bact"/>
    <property type="match status" value="1"/>
</dbReference>
<dbReference type="PANTHER" id="PTHR13501">
    <property type="entry name" value="CHLOROPLAST 50S RIBOSOMAL PROTEIN L22-RELATED"/>
    <property type="match status" value="1"/>
</dbReference>
<dbReference type="PANTHER" id="PTHR13501:SF8">
    <property type="entry name" value="LARGE RIBOSOMAL SUBUNIT PROTEIN UL22M"/>
    <property type="match status" value="1"/>
</dbReference>
<dbReference type="Pfam" id="PF00237">
    <property type="entry name" value="Ribosomal_L22"/>
    <property type="match status" value="1"/>
</dbReference>
<dbReference type="SUPFAM" id="SSF54843">
    <property type="entry name" value="Ribosomal protein L22"/>
    <property type="match status" value="1"/>
</dbReference>
<dbReference type="PROSITE" id="PS00464">
    <property type="entry name" value="RIBOSOMAL_L22"/>
    <property type="match status" value="1"/>
</dbReference>
<accession>A4VHN5</accession>
<organism>
    <name type="scientific">Stutzerimonas stutzeri (strain A1501)</name>
    <name type="common">Pseudomonas stutzeri</name>
    <dbReference type="NCBI Taxonomy" id="379731"/>
    <lineage>
        <taxon>Bacteria</taxon>
        <taxon>Pseudomonadati</taxon>
        <taxon>Pseudomonadota</taxon>
        <taxon>Gammaproteobacteria</taxon>
        <taxon>Pseudomonadales</taxon>
        <taxon>Pseudomonadaceae</taxon>
        <taxon>Stutzerimonas</taxon>
    </lineage>
</organism>
<evidence type="ECO:0000255" key="1">
    <source>
        <dbReference type="HAMAP-Rule" id="MF_01331"/>
    </source>
</evidence>
<evidence type="ECO:0000305" key="2"/>